<accession>A9F881</accession>
<reference key="1">
    <citation type="journal article" date="2007" name="Nat. Biotechnol.">
        <title>Complete genome sequence of the myxobacterium Sorangium cellulosum.</title>
        <authorList>
            <person name="Schneiker S."/>
            <person name="Perlova O."/>
            <person name="Kaiser O."/>
            <person name="Gerth K."/>
            <person name="Alici A."/>
            <person name="Altmeyer M.O."/>
            <person name="Bartels D."/>
            <person name="Bekel T."/>
            <person name="Beyer S."/>
            <person name="Bode E."/>
            <person name="Bode H.B."/>
            <person name="Bolten C.J."/>
            <person name="Choudhuri J.V."/>
            <person name="Doss S."/>
            <person name="Elnakady Y.A."/>
            <person name="Frank B."/>
            <person name="Gaigalat L."/>
            <person name="Goesmann A."/>
            <person name="Groeger C."/>
            <person name="Gross F."/>
            <person name="Jelsbak L."/>
            <person name="Jelsbak L."/>
            <person name="Kalinowski J."/>
            <person name="Kegler C."/>
            <person name="Knauber T."/>
            <person name="Konietzny S."/>
            <person name="Kopp M."/>
            <person name="Krause L."/>
            <person name="Krug D."/>
            <person name="Linke B."/>
            <person name="Mahmud T."/>
            <person name="Martinez-Arias R."/>
            <person name="McHardy A.C."/>
            <person name="Merai M."/>
            <person name="Meyer F."/>
            <person name="Mormann S."/>
            <person name="Munoz-Dorado J."/>
            <person name="Perez J."/>
            <person name="Pradella S."/>
            <person name="Rachid S."/>
            <person name="Raddatz G."/>
            <person name="Rosenau F."/>
            <person name="Rueckert C."/>
            <person name="Sasse F."/>
            <person name="Scharfe M."/>
            <person name="Schuster S.C."/>
            <person name="Suen G."/>
            <person name="Treuner-Lange A."/>
            <person name="Velicer G.J."/>
            <person name="Vorholter F.-J."/>
            <person name="Weissman K.J."/>
            <person name="Welch R.D."/>
            <person name="Wenzel S.C."/>
            <person name="Whitworth D.E."/>
            <person name="Wilhelm S."/>
            <person name="Wittmann C."/>
            <person name="Bloecker H."/>
            <person name="Puehler A."/>
            <person name="Mueller R."/>
        </authorList>
    </citation>
    <scope>NUCLEOTIDE SEQUENCE [LARGE SCALE GENOMIC DNA]</scope>
    <source>
        <strain>So ce56</strain>
    </source>
</reference>
<protein>
    <recommendedName>
        <fullName evidence="1">LexA repressor</fullName>
        <ecNumber evidence="1">3.4.21.88</ecNumber>
    </recommendedName>
</protein>
<comment type="function">
    <text evidence="1">Represses a number of genes involved in the response to DNA damage (SOS response), including recA and lexA. In the presence of single-stranded DNA, RecA interacts with LexA causing an autocatalytic cleavage which disrupts the DNA-binding part of LexA, leading to derepression of the SOS regulon and eventually DNA repair.</text>
</comment>
<comment type="catalytic activity">
    <reaction evidence="1">
        <text>Hydrolysis of Ala-|-Gly bond in repressor LexA.</text>
        <dbReference type="EC" id="3.4.21.88"/>
    </reaction>
</comment>
<comment type="subunit">
    <text evidence="1">Homodimer.</text>
</comment>
<comment type="similarity">
    <text evidence="1">Belongs to the peptidase S24 family.</text>
</comment>
<sequence length="230" mass="25198">MQGLTERQQQVLHYIRQSISERGYPPTLREIGAHMGIRSTNGVNDHLRALERKGYLTREDMKSRALRPRDLDGAGAGGGADLRGALVNGGNDAPANDQEDDLVEIAVVGRIAAGLPILAEEHVLDTVRIERTLVRGGREVFGLRVTGDSMIEAGIFSGDYIFVRRQLTAQRGDIVVALIGDEATVKYFFPEKDYVRFQPANAAMAPILVRASDFKPAMLLGVVVGVYRKL</sequence>
<organism>
    <name type="scientific">Sorangium cellulosum (strain So ce56)</name>
    <name type="common">Polyangium cellulosum (strain So ce56)</name>
    <dbReference type="NCBI Taxonomy" id="448385"/>
    <lineage>
        <taxon>Bacteria</taxon>
        <taxon>Pseudomonadati</taxon>
        <taxon>Myxococcota</taxon>
        <taxon>Polyangia</taxon>
        <taxon>Polyangiales</taxon>
        <taxon>Polyangiaceae</taxon>
        <taxon>Sorangium</taxon>
    </lineage>
</organism>
<feature type="chain" id="PRO_1000074068" description="LexA repressor">
    <location>
        <begin position="1"/>
        <end position="230"/>
    </location>
</feature>
<feature type="DNA-binding region" description="H-T-H motif" evidence="1">
    <location>
        <begin position="28"/>
        <end position="48"/>
    </location>
</feature>
<feature type="active site" description="For autocatalytic cleavage activity" evidence="1">
    <location>
        <position position="149"/>
    </location>
</feature>
<feature type="active site" description="For autocatalytic cleavage activity" evidence="1">
    <location>
        <position position="186"/>
    </location>
</feature>
<feature type="site" description="Cleavage; by autolysis" evidence="1">
    <location>
        <begin position="113"/>
        <end position="114"/>
    </location>
</feature>
<dbReference type="EC" id="3.4.21.88" evidence="1"/>
<dbReference type="EMBL" id="AM746676">
    <property type="protein sequence ID" value="CAN94632.1"/>
    <property type="molecule type" value="Genomic_DNA"/>
</dbReference>
<dbReference type="RefSeq" id="WP_012237101.1">
    <property type="nucleotide sequence ID" value="NC_010162.1"/>
</dbReference>
<dbReference type="SMR" id="A9F881"/>
<dbReference type="STRING" id="448385.sce4469"/>
<dbReference type="MEROPS" id="S24.001"/>
<dbReference type="KEGG" id="scl:sce4469"/>
<dbReference type="eggNOG" id="COG1974">
    <property type="taxonomic scope" value="Bacteria"/>
</dbReference>
<dbReference type="HOGENOM" id="CLU_066192_45_1_7"/>
<dbReference type="OrthoDB" id="9802364at2"/>
<dbReference type="BioCyc" id="SCEL448385:SCE_RS22925-MONOMER"/>
<dbReference type="Proteomes" id="UP000002139">
    <property type="component" value="Chromosome"/>
</dbReference>
<dbReference type="GO" id="GO:0003677">
    <property type="term" value="F:DNA binding"/>
    <property type="evidence" value="ECO:0007669"/>
    <property type="project" value="UniProtKB-UniRule"/>
</dbReference>
<dbReference type="GO" id="GO:0004252">
    <property type="term" value="F:serine-type endopeptidase activity"/>
    <property type="evidence" value="ECO:0007669"/>
    <property type="project" value="UniProtKB-UniRule"/>
</dbReference>
<dbReference type="GO" id="GO:0006281">
    <property type="term" value="P:DNA repair"/>
    <property type="evidence" value="ECO:0007669"/>
    <property type="project" value="UniProtKB-UniRule"/>
</dbReference>
<dbReference type="GO" id="GO:0006260">
    <property type="term" value="P:DNA replication"/>
    <property type="evidence" value="ECO:0007669"/>
    <property type="project" value="UniProtKB-UniRule"/>
</dbReference>
<dbReference type="GO" id="GO:0045892">
    <property type="term" value="P:negative regulation of DNA-templated transcription"/>
    <property type="evidence" value="ECO:0007669"/>
    <property type="project" value="UniProtKB-UniRule"/>
</dbReference>
<dbReference type="GO" id="GO:0006508">
    <property type="term" value="P:proteolysis"/>
    <property type="evidence" value="ECO:0007669"/>
    <property type="project" value="InterPro"/>
</dbReference>
<dbReference type="GO" id="GO:0009432">
    <property type="term" value="P:SOS response"/>
    <property type="evidence" value="ECO:0007669"/>
    <property type="project" value="UniProtKB-UniRule"/>
</dbReference>
<dbReference type="CDD" id="cd06529">
    <property type="entry name" value="S24_LexA-like"/>
    <property type="match status" value="1"/>
</dbReference>
<dbReference type="FunFam" id="1.10.10.10:FF:000009">
    <property type="entry name" value="LexA repressor"/>
    <property type="match status" value="1"/>
</dbReference>
<dbReference type="FunFam" id="2.10.109.10:FF:000001">
    <property type="entry name" value="LexA repressor"/>
    <property type="match status" value="1"/>
</dbReference>
<dbReference type="Gene3D" id="2.10.109.10">
    <property type="entry name" value="Umud Fragment, subunit A"/>
    <property type="match status" value="1"/>
</dbReference>
<dbReference type="Gene3D" id="1.10.10.10">
    <property type="entry name" value="Winged helix-like DNA-binding domain superfamily/Winged helix DNA-binding domain"/>
    <property type="match status" value="1"/>
</dbReference>
<dbReference type="HAMAP" id="MF_00015">
    <property type="entry name" value="LexA"/>
    <property type="match status" value="1"/>
</dbReference>
<dbReference type="InterPro" id="IPR006200">
    <property type="entry name" value="LexA"/>
</dbReference>
<dbReference type="InterPro" id="IPR039418">
    <property type="entry name" value="LexA-like"/>
</dbReference>
<dbReference type="InterPro" id="IPR036286">
    <property type="entry name" value="LexA/Signal_pep-like_sf"/>
</dbReference>
<dbReference type="InterPro" id="IPR006199">
    <property type="entry name" value="LexA_DNA-bd_dom"/>
</dbReference>
<dbReference type="InterPro" id="IPR050077">
    <property type="entry name" value="LexA_repressor"/>
</dbReference>
<dbReference type="InterPro" id="IPR006197">
    <property type="entry name" value="Peptidase_S24_LexA"/>
</dbReference>
<dbReference type="InterPro" id="IPR015927">
    <property type="entry name" value="Peptidase_S24_S26A/B/C"/>
</dbReference>
<dbReference type="InterPro" id="IPR036388">
    <property type="entry name" value="WH-like_DNA-bd_sf"/>
</dbReference>
<dbReference type="InterPro" id="IPR036390">
    <property type="entry name" value="WH_DNA-bd_sf"/>
</dbReference>
<dbReference type="NCBIfam" id="TIGR00498">
    <property type="entry name" value="lexA"/>
    <property type="match status" value="1"/>
</dbReference>
<dbReference type="PANTHER" id="PTHR33516">
    <property type="entry name" value="LEXA REPRESSOR"/>
    <property type="match status" value="1"/>
</dbReference>
<dbReference type="PANTHER" id="PTHR33516:SF2">
    <property type="entry name" value="LEXA REPRESSOR-RELATED"/>
    <property type="match status" value="1"/>
</dbReference>
<dbReference type="Pfam" id="PF01726">
    <property type="entry name" value="LexA_DNA_bind"/>
    <property type="match status" value="1"/>
</dbReference>
<dbReference type="Pfam" id="PF00717">
    <property type="entry name" value="Peptidase_S24"/>
    <property type="match status" value="1"/>
</dbReference>
<dbReference type="PRINTS" id="PR00726">
    <property type="entry name" value="LEXASERPTASE"/>
</dbReference>
<dbReference type="SUPFAM" id="SSF51306">
    <property type="entry name" value="LexA/Signal peptidase"/>
    <property type="match status" value="1"/>
</dbReference>
<dbReference type="SUPFAM" id="SSF46785">
    <property type="entry name" value="Winged helix' DNA-binding domain"/>
    <property type="match status" value="1"/>
</dbReference>
<gene>
    <name evidence="1" type="primary">lexA</name>
    <name type="ordered locus">sce4469</name>
</gene>
<evidence type="ECO:0000255" key="1">
    <source>
        <dbReference type="HAMAP-Rule" id="MF_00015"/>
    </source>
</evidence>
<name>LEXA_SORC5</name>
<proteinExistence type="inferred from homology"/>
<keyword id="KW-0068">Autocatalytic cleavage</keyword>
<keyword id="KW-0227">DNA damage</keyword>
<keyword id="KW-0234">DNA repair</keyword>
<keyword id="KW-0235">DNA replication</keyword>
<keyword id="KW-0238">DNA-binding</keyword>
<keyword id="KW-0378">Hydrolase</keyword>
<keyword id="KW-1185">Reference proteome</keyword>
<keyword id="KW-0678">Repressor</keyword>
<keyword id="KW-0742">SOS response</keyword>
<keyword id="KW-0804">Transcription</keyword>
<keyword id="KW-0805">Transcription regulation</keyword>